<feature type="chain" id="PRO_0000209041" description="Probable potassium transport system protein Kup">
    <location>
        <begin position="1"/>
        <end position="633"/>
    </location>
</feature>
<feature type="transmembrane region" description="Helical" evidence="1">
    <location>
        <begin position="19"/>
        <end position="39"/>
    </location>
</feature>
<feature type="transmembrane region" description="Helical" evidence="1">
    <location>
        <begin position="61"/>
        <end position="81"/>
    </location>
</feature>
<feature type="transmembrane region" description="Helical" evidence="1">
    <location>
        <begin position="112"/>
        <end position="132"/>
    </location>
</feature>
<feature type="transmembrane region" description="Helical" evidence="1">
    <location>
        <begin position="148"/>
        <end position="168"/>
    </location>
</feature>
<feature type="transmembrane region" description="Helical" evidence="1">
    <location>
        <begin position="179"/>
        <end position="199"/>
    </location>
</feature>
<feature type="transmembrane region" description="Helical" evidence="1">
    <location>
        <begin position="217"/>
        <end position="237"/>
    </location>
</feature>
<feature type="transmembrane region" description="Helical" evidence="1">
    <location>
        <begin position="258"/>
        <end position="278"/>
    </location>
</feature>
<feature type="transmembrane region" description="Helical" evidence="1">
    <location>
        <begin position="290"/>
        <end position="310"/>
    </location>
</feature>
<feature type="transmembrane region" description="Helical" evidence="1">
    <location>
        <begin position="348"/>
        <end position="368"/>
    </location>
</feature>
<feature type="transmembrane region" description="Helical" evidence="1">
    <location>
        <begin position="380"/>
        <end position="400"/>
    </location>
</feature>
<feature type="transmembrane region" description="Helical" evidence="1">
    <location>
        <begin position="405"/>
        <end position="425"/>
    </location>
</feature>
<feature type="transmembrane region" description="Helical" evidence="1">
    <location>
        <begin position="430"/>
        <end position="450"/>
    </location>
</feature>
<reference key="1">
    <citation type="journal article" date="2005" name="Nat. Biotechnol.">
        <title>Complete genome sequence of the plant commensal Pseudomonas fluorescens Pf-5.</title>
        <authorList>
            <person name="Paulsen I.T."/>
            <person name="Press C.M."/>
            <person name="Ravel J."/>
            <person name="Kobayashi D.Y."/>
            <person name="Myers G.S.A."/>
            <person name="Mavrodi D.V."/>
            <person name="DeBoy R.T."/>
            <person name="Seshadri R."/>
            <person name="Ren Q."/>
            <person name="Madupu R."/>
            <person name="Dodson R.J."/>
            <person name="Durkin A.S."/>
            <person name="Brinkac L.M."/>
            <person name="Daugherty S.C."/>
            <person name="Sullivan S.A."/>
            <person name="Rosovitz M.J."/>
            <person name="Gwinn M.L."/>
            <person name="Zhou L."/>
            <person name="Schneider D.J."/>
            <person name="Cartinhour S.W."/>
            <person name="Nelson W.C."/>
            <person name="Weidman J."/>
            <person name="Watkins K."/>
            <person name="Tran K."/>
            <person name="Khouri H."/>
            <person name="Pierson E.A."/>
            <person name="Pierson L.S. III"/>
            <person name="Thomashow L.S."/>
            <person name="Loper J.E."/>
        </authorList>
    </citation>
    <scope>NUCLEOTIDE SEQUENCE [LARGE SCALE GENOMIC DNA]</scope>
    <source>
        <strain>ATCC BAA-477 / NRRL B-23932 / Pf-5</strain>
    </source>
</reference>
<comment type="function">
    <text evidence="1">Transport of potassium into the cell. Likely operates as a K(+):H(+) symporter.</text>
</comment>
<comment type="catalytic activity">
    <reaction evidence="1">
        <text>K(+)(in) + H(+)(in) = K(+)(out) + H(+)(out)</text>
        <dbReference type="Rhea" id="RHEA:28490"/>
        <dbReference type="ChEBI" id="CHEBI:15378"/>
        <dbReference type="ChEBI" id="CHEBI:29103"/>
    </reaction>
    <physiologicalReaction direction="right-to-left" evidence="1">
        <dbReference type="Rhea" id="RHEA:28492"/>
    </physiologicalReaction>
</comment>
<comment type="subcellular location">
    <subcellularLocation>
        <location evidence="1">Cell inner membrane</location>
        <topology evidence="1">Multi-pass membrane protein</topology>
    </subcellularLocation>
</comment>
<comment type="similarity">
    <text evidence="1">Belongs to the HAK/KUP transporter (TC 2.A.72) family.</text>
</comment>
<accession>Q4KHA4</accession>
<proteinExistence type="inferred from homology"/>
<keyword id="KW-0997">Cell inner membrane</keyword>
<keyword id="KW-1003">Cell membrane</keyword>
<keyword id="KW-0406">Ion transport</keyword>
<keyword id="KW-0472">Membrane</keyword>
<keyword id="KW-0630">Potassium</keyword>
<keyword id="KW-0633">Potassium transport</keyword>
<keyword id="KW-0769">Symport</keyword>
<keyword id="KW-0812">Transmembrane</keyword>
<keyword id="KW-1133">Transmembrane helix</keyword>
<keyword id="KW-0813">Transport</keyword>
<sequence length="633" mass="68499">MGQASSQAASGEHSGVKPLGMLVAAVGVVYGDIGTSPLYTLKEVFSGSYGVQVNHDGVFGILALIFWSLVWVVSIKYVLFILRADNQGEGGIMALTALARRASASYPRLRSVLVILGLIGASLFYGDSMITPAISVLSAVEGLELAFSGLEHWVVPLALVVLVALFLIQKHGTDRIGKLFGPVMVAWFLVLGGLGINGILQHPEVLQALNPVWGVRFFIVHPGMGVAILGAVVLALTGAEALYADMGHFGRKPIARAWFALVLPALVLNYFGQGALLLENPEAARNPFYLLAPGWALIPLVVLATLATVIASQAVISGAFSLTRQAIQLGYIPRMHIQHTSSAEQGQIYIGAVNWSLMVGVILLVLGFESSGALASAYGVAVTGTMLITSILVAAVMLLLWKWPPVLAVPVLLGFLLVDGLFFAANVPKIFQGGAFPVLAGIVLFILMTTWKRGKELLVDRLDEGGLPLPIFISSIRVQPPHRVQGTAVFLTARPDAVPHALLHNLLHNQVLHEQVVLLTVVYEDIPRVPANRRFEVDSYGEGFFRVILHFGFTDEPDVPEALKLCHLDELDFSPMRTTYFLSRETVIASKLVGMARWREALFAFMLKNANGNLRFFKLPVNRVIELGTQVEM</sequence>
<dbReference type="EMBL" id="CP000076">
    <property type="protein sequence ID" value="AAY90535.1"/>
    <property type="molecule type" value="Genomic_DNA"/>
</dbReference>
<dbReference type="RefSeq" id="WP_011059595.1">
    <property type="nucleotide sequence ID" value="NC_004129.6"/>
</dbReference>
<dbReference type="STRING" id="220664.PFL_1248"/>
<dbReference type="KEGG" id="pfl:PFL_1248"/>
<dbReference type="PATRIC" id="fig|220664.5.peg.1281"/>
<dbReference type="eggNOG" id="COG3158">
    <property type="taxonomic scope" value="Bacteria"/>
</dbReference>
<dbReference type="HOGENOM" id="CLU_008142_4_2_6"/>
<dbReference type="Proteomes" id="UP000008540">
    <property type="component" value="Chromosome"/>
</dbReference>
<dbReference type="GO" id="GO:0005886">
    <property type="term" value="C:plasma membrane"/>
    <property type="evidence" value="ECO:0007669"/>
    <property type="project" value="UniProtKB-SubCell"/>
</dbReference>
<dbReference type="GO" id="GO:0015079">
    <property type="term" value="F:potassium ion transmembrane transporter activity"/>
    <property type="evidence" value="ECO:0007669"/>
    <property type="project" value="UniProtKB-UniRule"/>
</dbReference>
<dbReference type="GO" id="GO:0015293">
    <property type="term" value="F:symporter activity"/>
    <property type="evidence" value="ECO:0007669"/>
    <property type="project" value="UniProtKB-UniRule"/>
</dbReference>
<dbReference type="HAMAP" id="MF_01522">
    <property type="entry name" value="Kup"/>
    <property type="match status" value="1"/>
</dbReference>
<dbReference type="InterPro" id="IPR003855">
    <property type="entry name" value="K+_transporter"/>
</dbReference>
<dbReference type="InterPro" id="IPR053952">
    <property type="entry name" value="K_trans_C"/>
</dbReference>
<dbReference type="InterPro" id="IPR053951">
    <property type="entry name" value="K_trans_N"/>
</dbReference>
<dbReference type="InterPro" id="IPR023051">
    <property type="entry name" value="Kup"/>
</dbReference>
<dbReference type="PANTHER" id="PTHR30540:SF79">
    <property type="entry name" value="LOW AFFINITY POTASSIUM TRANSPORT SYSTEM PROTEIN KUP"/>
    <property type="match status" value="1"/>
</dbReference>
<dbReference type="PANTHER" id="PTHR30540">
    <property type="entry name" value="OSMOTIC STRESS POTASSIUM TRANSPORTER"/>
    <property type="match status" value="1"/>
</dbReference>
<dbReference type="Pfam" id="PF02705">
    <property type="entry name" value="K_trans"/>
    <property type="match status" value="1"/>
</dbReference>
<dbReference type="Pfam" id="PF22776">
    <property type="entry name" value="K_trans_C"/>
    <property type="match status" value="1"/>
</dbReference>
<evidence type="ECO:0000255" key="1">
    <source>
        <dbReference type="HAMAP-Rule" id="MF_01522"/>
    </source>
</evidence>
<protein>
    <recommendedName>
        <fullName evidence="1">Probable potassium transport system protein Kup</fullName>
    </recommendedName>
</protein>
<name>KUP_PSEF5</name>
<organism>
    <name type="scientific">Pseudomonas fluorescens (strain ATCC BAA-477 / NRRL B-23932 / Pf-5)</name>
    <dbReference type="NCBI Taxonomy" id="220664"/>
    <lineage>
        <taxon>Bacteria</taxon>
        <taxon>Pseudomonadati</taxon>
        <taxon>Pseudomonadota</taxon>
        <taxon>Gammaproteobacteria</taxon>
        <taxon>Pseudomonadales</taxon>
        <taxon>Pseudomonadaceae</taxon>
        <taxon>Pseudomonas</taxon>
    </lineage>
</organism>
<gene>
    <name evidence="1" type="primary">kup</name>
    <name type="ordered locus">PFL_1248</name>
</gene>